<reference key="1">
    <citation type="submission" date="1998-11" db="EMBL/GenBank/DDBJ databases">
        <title>Human unknown mRNA highly conserved among eukaryotes.</title>
        <authorList>
            <person name="Zhu X."/>
            <person name="Zhao X."/>
        </authorList>
    </citation>
    <scope>NUCLEOTIDE SEQUENCE [MRNA] (ISOFORM 1)</scope>
    <source>
        <tissue>Brain</tissue>
    </source>
</reference>
<reference key="2">
    <citation type="submission" date="1998-07" db="EMBL/GenBank/DDBJ databases">
        <authorList>
            <person name="Peng Y."/>
            <person name="Song H."/>
            <person name="Dai M."/>
            <person name="Huang Q."/>
            <person name="Mao Y."/>
            <person name="Zhang Q."/>
            <person name="Mao M."/>
            <person name="Fu G."/>
            <person name="Luo M."/>
            <person name="Chen J."/>
            <person name="Hu R."/>
        </authorList>
    </citation>
    <scope>NUCLEOTIDE SEQUENCE [LARGE SCALE MRNA] (ISOFORM 1)</scope>
    <source>
        <tissue>Pituitary tumor</tissue>
    </source>
</reference>
<reference key="3">
    <citation type="journal article" date="2000" name="Genome Res.">
        <title>Cloning and functional analysis of cDNAs with open reading frames for 300 previously undefined genes expressed in CD34+ hematopoietic stem/progenitor cells.</title>
        <authorList>
            <person name="Zhang Q.-H."/>
            <person name="Ye M."/>
            <person name="Wu X.-Y."/>
            <person name="Ren S.-X."/>
            <person name="Zhao M."/>
            <person name="Zhao C.-J."/>
            <person name="Fu G."/>
            <person name="Shen Y."/>
            <person name="Fan H.-Y."/>
            <person name="Lu G."/>
            <person name="Zhong M."/>
            <person name="Xu X.-R."/>
            <person name="Han Z.-G."/>
            <person name="Zhang J.-W."/>
            <person name="Tao J."/>
            <person name="Huang Q.-H."/>
            <person name="Zhou J."/>
            <person name="Hu G.-X."/>
            <person name="Gu J."/>
            <person name="Chen S.-J."/>
            <person name="Chen Z."/>
        </authorList>
    </citation>
    <scope>NUCLEOTIDE SEQUENCE [LARGE SCALE MRNA] (ISOFORM 1)</scope>
    <source>
        <tissue>Umbilical cord blood</tissue>
    </source>
</reference>
<reference key="4">
    <citation type="journal article" date="2000" name="Genome Res.">
        <title>Identification of novel human genes evolutionarily conserved in Caenorhabditis elegans by comparative proteomics.</title>
        <authorList>
            <person name="Lai C.-H."/>
            <person name="Chou C.-Y."/>
            <person name="Ch'ang L.-Y."/>
            <person name="Liu C.-S."/>
            <person name="Lin W.-C."/>
        </authorList>
    </citation>
    <scope>NUCLEOTIDE SEQUENCE [LARGE SCALE MRNA] (ISOFORM 1)</scope>
</reference>
<reference key="5">
    <citation type="journal article" date="2004" name="Nat. Genet.">
        <title>Complete sequencing and characterization of 21,243 full-length human cDNAs.</title>
        <authorList>
            <person name="Ota T."/>
            <person name="Suzuki Y."/>
            <person name="Nishikawa T."/>
            <person name="Otsuki T."/>
            <person name="Sugiyama T."/>
            <person name="Irie R."/>
            <person name="Wakamatsu A."/>
            <person name="Hayashi K."/>
            <person name="Sato H."/>
            <person name="Nagai K."/>
            <person name="Kimura K."/>
            <person name="Makita H."/>
            <person name="Sekine M."/>
            <person name="Obayashi M."/>
            <person name="Nishi T."/>
            <person name="Shibahara T."/>
            <person name="Tanaka T."/>
            <person name="Ishii S."/>
            <person name="Yamamoto J."/>
            <person name="Saito K."/>
            <person name="Kawai Y."/>
            <person name="Isono Y."/>
            <person name="Nakamura Y."/>
            <person name="Nagahari K."/>
            <person name="Murakami K."/>
            <person name="Yasuda T."/>
            <person name="Iwayanagi T."/>
            <person name="Wagatsuma M."/>
            <person name="Shiratori A."/>
            <person name="Sudo H."/>
            <person name="Hosoiri T."/>
            <person name="Kaku Y."/>
            <person name="Kodaira H."/>
            <person name="Kondo H."/>
            <person name="Sugawara M."/>
            <person name="Takahashi M."/>
            <person name="Kanda K."/>
            <person name="Yokoi T."/>
            <person name="Furuya T."/>
            <person name="Kikkawa E."/>
            <person name="Omura Y."/>
            <person name="Abe K."/>
            <person name="Kamihara K."/>
            <person name="Katsuta N."/>
            <person name="Sato K."/>
            <person name="Tanikawa M."/>
            <person name="Yamazaki M."/>
            <person name="Ninomiya K."/>
            <person name="Ishibashi T."/>
            <person name="Yamashita H."/>
            <person name="Murakawa K."/>
            <person name="Fujimori K."/>
            <person name="Tanai H."/>
            <person name="Kimata M."/>
            <person name="Watanabe M."/>
            <person name="Hiraoka S."/>
            <person name="Chiba Y."/>
            <person name="Ishida S."/>
            <person name="Ono Y."/>
            <person name="Takiguchi S."/>
            <person name="Watanabe S."/>
            <person name="Yosida M."/>
            <person name="Hotuta T."/>
            <person name="Kusano J."/>
            <person name="Kanehori K."/>
            <person name="Takahashi-Fujii A."/>
            <person name="Hara H."/>
            <person name="Tanase T.-O."/>
            <person name="Nomura Y."/>
            <person name="Togiya S."/>
            <person name="Komai F."/>
            <person name="Hara R."/>
            <person name="Takeuchi K."/>
            <person name="Arita M."/>
            <person name="Imose N."/>
            <person name="Musashino K."/>
            <person name="Yuuki H."/>
            <person name="Oshima A."/>
            <person name="Sasaki N."/>
            <person name="Aotsuka S."/>
            <person name="Yoshikawa Y."/>
            <person name="Matsunawa H."/>
            <person name="Ichihara T."/>
            <person name="Shiohata N."/>
            <person name="Sano S."/>
            <person name="Moriya S."/>
            <person name="Momiyama H."/>
            <person name="Satoh N."/>
            <person name="Takami S."/>
            <person name="Terashima Y."/>
            <person name="Suzuki O."/>
            <person name="Nakagawa S."/>
            <person name="Senoh A."/>
            <person name="Mizoguchi H."/>
            <person name="Goto Y."/>
            <person name="Shimizu F."/>
            <person name="Wakebe H."/>
            <person name="Hishigaki H."/>
            <person name="Watanabe T."/>
            <person name="Sugiyama A."/>
            <person name="Takemoto M."/>
            <person name="Kawakami B."/>
            <person name="Yamazaki M."/>
            <person name="Watanabe K."/>
            <person name="Kumagai A."/>
            <person name="Itakura S."/>
            <person name="Fukuzumi Y."/>
            <person name="Fujimori Y."/>
            <person name="Komiyama M."/>
            <person name="Tashiro H."/>
            <person name="Tanigami A."/>
            <person name="Fujiwara T."/>
            <person name="Ono T."/>
            <person name="Yamada K."/>
            <person name="Fujii Y."/>
            <person name="Ozaki K."/>
            <person name="Hirao M."/>
            <person name="Ohmori Y."/>
            <person name="Kawabata A."/>
            <person name="Hikiji T."/>
            <person name="Kobatake N."/>
            <person name="Inagaki H."/>
            <person name="Ikema Y."/>
            <person name="Okamoto S."/>
            <person name="Okitani R."/>
            <person name="Kawakami T."/>
            <person name="Noguchi S."/>
            <person name="Itoh T."/>
            <person name="Shigeta K."/>
            <person name="Senba T."/>
            <person name="Matsumura K."/>
            <person name="Nakajima Y."/>
            <person name="Mizuno T."/>
            <person name="Morinaga M."/>
            <person name="Sasaki M."/>
            <person name="Togashi T."/>
            <person name="Oyama M."/>
            <person name="Hata H."/>
            <person name="Watanabe M."/>
            <person name="Komatsu T."/>
            <person name="Mizushima-Sugano J."/>
            <person name="Satoh T."/>
            <person name="Shirai Y."/>
            <person name="Takahashi Y."/>
            <person name="Nakagawa K."/>
            <person name="Okumura K."/>
            <person name="Nagase T."/>
            <person name="Nomura N."/>
            <person name="Kikuchi H."/>
            <person name="Masuho Y."/>
            <person name="Yamashita R."/>
            <person name="Nakai K."/>
            <person name="Yada T."/>
            <person name="Nakamura Y."/>
            <person name="Ohara O."/>
            <person name="Isogai T."/>
            <person name="Sugano S."/>
        </authorList>
    </citation>
    <scope>NUCLEOTIDE SEQUENCE [LARGE SCALE MRNA] (ISOFORMS 1 AND 2)</scope>
    <source>
        <tissue>Brain</tissue>
    </source>
</reference>
<reference key="6">
    <citation type="journal article" date="2006" name="Nature">
        <title>Human chromosome 11 DNA sequence and analysis including novel gene identification.</title>
        <authorList>
            <person name="Taylor T.D."/>
            <person name="Noguchi H."/>
            <person name="Totoki Y."/>
            <person name="Toyoda A."/>
            <person name="Kuroki Y."/>
            <person name="Dewar K."/>
            <person name="Lloyd C."/>
            <person name="Itoh T."/>
            <person name="Takeda T."/>
            <person name="Kim D.-W."/>
            <person name="She X."/>
            <person name="Barlow K.F."/>
            <person name="Bloom T."/>
            <person name="Bruford E."/>
            <person name="Chang J.L."/>
            <person name="Cuomo C.A."/>
            <person name="Eichler E."/>
            <person name="FitzGerald M.G."/>
            <person name="Jaffe D.B."/>
            <person name="LaButti K."/>
            <person name="Nicol R."/>
            <person name="Park H.-S."/>
            <person name="Seaman C."/>
            <person name="Sougnez C."/>
            <person name="Yang X."/>
            <person name="Zimmer A.R."/>
            <person name="Zody M.C."/>
            <person name="Birren B.W."/>
            <person name="Nusbaum C."/>
            <person name="Fujiyama A."/>
            <person name="Hattori M."/>
            <person name="Rogers J."/>
            <person name="Lander E.S."/>
            <person name="Sakaki Y."/>
        </authorList>
    </citation>
    <scope>NUCLEOTIDE SEQUENCE [LARGE SCALE GENOMIC DNA]</scope>
</reference>
<reference key="7">
    <citation type="submission" date="2005-07" db="EMBL/GenBank/DDBJ databases">
        <authorList>
            <person name="Mural R.J."/>
            <person name="Istrail S."/>
            <person name="Sutton G.G."/>
            <person name="Florea L."/>
            <person name="Halpern A.L."/>
            <person name="Mobarry C.M."/>
            <person name="Lippert R."/>
            <person name="Walenz B."/>
            <person name="Shatkay H."/>
            <person name="Dew I."/>
            <person name="Miller J.R."/>
            <person name="Flanigan M.J."/>
            <person name="Edwards N.J."/>
            <person name="Bolanos R."/>
            <person name="Fasulo D."/>
            <person name="Halldorsson B.V."/>
            <person name="Hannenhalli S."/>
            <person name="Turner R."/>
            <person name="Yooseph S."/>
            <person name="Lu F."/>
            <person name="Nusskern D.R."/>
            <person name="Shue B.C."/>
            <person name="Zheng X.H."/>
            <person name="Zhong F."/>
            <person name="Delcher A.L."/>
            <person name="Huson D.H."/>
            <person name="Kravitz S.A."/>
            <person name="Mouchard L."/>
            <person name="Reinert K."/>
            <person name="Remington K.A."/>
            <person name="Clark A.G."/>
            <person name="Waterman M.S."/>
            <person name="Eichler E.E."/>
            <person name="Adams M.D."/>
            <person name="Hunkapiller M.W."/>
            <person name="Myers E.W."/>
            <person name="Venter J.C."/>
        </authorList>
    </citation>
    <scope>NUCLEOTIDE SEQUENCE [LARGE SCALE GENOMIC DNA]</scope>
</reference>
<reference key="8">
    <citation type="journal article" date="2004" name="Genome Res.">
        <title>The status, quality, and expansion of the NIH full-length cDNA project: the Mammalian Gene Collection (MGC).</title>
        <authorList>
            <consortium name="The MGC Project Team"/>
        </authorList>
    </citation>
    <scope>NUCLEOTIDE SEQUENCE [LARGE SCALE MRNA] (ISOFORM 1)</scope>
    <source>
        <tissue>Lung</tissue>
    </source>
</reference>
<reference key="9">
    <citation type="journal article" date="2002" name="Nature">
        <title>Functional organization of the yeast proteome by systematic analysis of protein complexes.</title>
        <authorList>
            <person name="Gavin A.-C."/>
            <person name="Boesche M."/>
            <person name="Krause R."/>
            <person name="Grandi P."/>
            <person name="Marzioch M."/>
            <person name="Bauer A."/>
            <person name="Schultz J."/>
            <person name="Rick J.M."/>
            <person name="Michon A.-M."/>
            <person name="Cruciat C.-M."/>
            <person name="Remor M."/>
            <person name="Hoefert C."/>
            <person name="Schelder M."/>
            <person name="Brajenovic M."/>
            <person name="Ruffner H."/>
            <person name="Merino A."/>
            <person name="Klein K."/>
            <person name="Hudak M."/>
            <person name="Dickson D."/>
            <person name="Rudi T."/>
            <person name="Gnau V."/>
            <person name="Bauch A."/>
            <person name="Bastuck S."/>
            <person name="Huhse B."/>
            <person name="Leutwein C."/>
            <person name="Heurtier M.-A."/>
            <person name="Copley R.R."/>
            <person name="Edelmann A."/>
            <person name="Querfurth E."/>
            <person name="Rybin V."/>
            <person name="Drewes G."/>
            <person name="Raida M."/>
            <person name="Bouwmeester T."/>
            <person name="Bork P."/>
            <person name="Seraphin B."/>
            <person name="Kuster B."/>
            <person name="Neubauer G."/>
            <person name="Superti-Furga G."/>
        </authorList>
    </citation>
    <scope>IDENTIFICATION IN TRAPP COMPLEX</scope>
</reference>
<reference key="10">
    <citation type="journal article" date="2009" name="Traffic">
        <title>TRAPPC2L is a novel, highly conserved TRAPP-interacting protein.</title>
        <authorList>
            <person name="Scrivens P.J."/>
            <person name="Shahrzad N."/>
            <person name="Moores A."/>
            <person name="Morin A."/>
            <person name="Brunet S."/>
            <person name="Sacher M."/>
        </authorList>
    </citation>
    <scope>IDENTIFICATION IN TRAPP COMPLEX</scope>
    <scope>INTERACTION WITH TRAPPC2L</scope>
</reference>
<reference key="11">
    <citation type="journal article" date="2011" name="BMC Syst. Biol.">
        <title>Initial characterization of the human central proteome.</title>
        <authorList>
            <person name="Burkard T.R."/>
            <person name="Planyavsky M."/>
            <person name="Kaupe I."/>
            <person name="Breitwieser F.P."/>
            <person name="Buerckstuemmer T."/>
            <person name="Bennett K.L."/>
            <person name="Superti-Furga G."/>
            <person name="Colinge J."/>
        </authorList>
    </citation>
    <scope>IDENTIFICATION BY MASS SPECTROMETRY [LARGE SCALE ANALYSIS]</scope>
</reference>
<reference key="12">
    <citation type="journal article" date="2011" name="Mol. Biol. Cell">
        <title>C4orf41 and TTC-15 are mammalian TRAPP components with a role at an early stage in ER-to-Golgi trafficking.</title>
        <authorList>
            <person name="Scrivens P.J."/>
            <person name="Noueihed B."/>
            <person name="Shahrzad N."/>
            <person name="Hul S."/>
            <person name="Brunet S."/>
            <person name="Sacher M."/>
        </authorList>
    </citation>
    <scope>IDENTIFICATION IN TRAPP COMPLEX</scope>
</reference>
<reference key="13">
    <citation type="journal article" date="2020" name="Brain">
        <title>Deficiencies in vesicular transport mediated by TRAPPC4 are associated with severe syndromic intellectual disability.</title>
        <authorList>
            <person name="Van Bergen N.J."/>
            <person name="Guo Y."/>
            <person name="Al-Deri N."/>
            <person name="Lipatova Z."/>
            <person name="Stanga D."/>
            <person name="Zhao S."/>
            <person name="Murtazina R."/>
            <person name="Gyurkovska V."/>
            <person name="Pehlivan D."/>
            <person name="Mitani T."/>
            <person name="Gezdirici A."/>
            <person name="Antony J."/>
            <person name="Collins F."/>
            <person name="Willis M.J.H."/>
            <person name="Coban Akdemir Z.H."/>
            <person name="Liu P."/>
            <person name="Punetha J."/>
            <person name="Hunter J.V."/>
            <person name="Jhangiani S.N."/>
            <person name="Fatih J.M."/>
            <person name="Rosenfeld J.A."/>
            <person name="Posey J.E."/>
            <person name="Gibbs R.A."/>
            <person name="Karaca E."/>
            <person name="Massey S."/>
            <person name="Ranasinghe T.G."/>
            <person name="Sleiman P."/>
            <person name="Troedson C."/>
            <person name="Lupski J.R."/>
            <person name="Sacher M."/>
            <person name="Segev N."/>
            <person name="Hakonarson H."/>
            <person name="Christodoulou J."/>
        </authorList>
    </citation>
    <scope>INVOLVEMENT IN NEDESBA</scope>
    <scope>FUNCTION</scope>
    <scope>IDENTIFICATION IN TRAPP COMPLEX</scope>
</reference>
<proteinExistence type="evidence at protein level"/>
<organism>
    <name type="scientific">Homo sapiens</name>
    <name type="common">Human</name>
    <dbReference type="NCBI Taxonomy" id="9606"/>
    <lineage>
        <taxon>Eukaryota</taxon>
        <taxon>Metazoa</taxon>
        <taxon>Chordata</taxon>
        <taxon>Craniata</taxon>
        <taxon>Vertebrata</taxon>
        <taxon>Euteleostomi</taxon>
        <taxon>Mammalia</taxon>
        <taxon>Eutheria</taxon>
        <taxon>Euarchontoglires</taxon>
        <taxon>Primates</taxon>
        <taxon>Haplorrhini</taxon>
        <taxon>Catarrhini</taxon>
        <taxon>Hominidae</taxon>
        <taxon>Homo</taxon>
    </lineage>
</organism>
<sequence>MAIFSVYVVNKAGGLIYQLDSYAPRAEAEKTFSYPLDLLLKLHDERVLVAFGQRDGIRVGHAVLAINGMDVNGRYTADGKEVLEYLGNPANYPVSIRFGRPRLTSNEKLMLASMFHSLFAIGSQLSPEQGSSGIEMLETDTFKLHCYQTLTGIKFVVLADPRQAGIDSLLRKIYEIYSDFALKNPFYSLEMPIRCELFDQNLKLALEVAEKAGTFGPGS</sequence>
<accession>Q9Y296</accession>
<accession>A8K3A5</accession>
<accession>B4DME1</accession>
<comment type="function">
    <text evidence="1 2 5">Core component of the TRAPP complexes which has a function of guanine nucleotide exchange factor activity for Rab1 GTPase (Probable). Plays a role in vesicular transport from endoplasmic reticulum to Golgi and autophagy (PubMed:31794024). May play a role in dendrite postsynaptic membrane trafficking (By similarity).</text>
</comment>
<comment type="subunit">
    <text evidence="1 5">Component of the multisubunit TRAPP (transport protein particle) complex, which includes at least TRAPPC2, TRAPPC2L, TRAPPC3, TRAPPC3L, TRAPPC4, TRAPPC5, TRAPPC8, TRAPPC9, TRAPPC10, TRAPPC11 and TRAPPC12 (Probable). Interacts with SDC2 (By similarity).</text>
</comment>
<comment type="interaction">
    <interactant intactId="EBI-722888">
        <id>Q9Y296</id>
    </interactant>
    <interactant intactId="EBI-959949">
        <id>P28482</id>
        <label>MAPK1</label>
    </interactant>
    <organismsDiffer>false</organismsDiffer>
    <experiments>3</experiments>
</comment>
<comment type="interaction">
    <interactant intactId="EBI-722888">
        <id>Q9Y296</id>
    </interactant>
    <interactant intactId="EBI-1172213">
        <id>Q9CQA1</id>
        <label>Trappc5</label>
    </interactant>
    <organismsDiffer>true</organismsDiffer>
    <experiments>2</experiments>
</comment>
<comment type="subcellular location">
    <subcellularLocation>
        <location evidence="1">Postsynaptic cell membrane</location>
    </subcellularLocation>
    <subcellularLocation>
        <location evidence="1">Golgi apparatus membrane</location>
    </subcellularLocation>
    <subcellularLocation>
        <location evidence="1">Endoplasmic reticulum</location>
    </subcellularLocation>
    <subcellularLocation>
        <location evidence="1">Vesicle</location>
    </subcellularLocation>
    <text evidence="1">Associated with postsynaptic membranes and in intracellular cisterns and vesicles (Golgi).</text>
</comment>
<comment type="alternative products">
    <event type="alternative splicing"/>
    <isoform>
        <id>Q9Y296-1</id>
        <name>1</name>
        <sequence type="displayed"/>
    </isoform>
    <isoform>
        <id>Q9Y296-2</id>
        <name>2</name>
        <sequence type="described" ref="VSP_056348"/>
    </isoform>
</comment>
<comment type="disease" evidence="2">
    <disease id="DI-05749">
        <name>Neurodevelopmental disorder with epilepsy, spasticity, and brain atrophy</name>
        <acronym>NEDESBA</acronym>
        <description>An autosomal recessive disorder characterized by severely impaired global development apparent soon after birth, early-onset seizures, lack of psychomotor development, spastic quadriparesis, progressive cortical and cerebellar atrophy, and dysmorphic features, including microcephaly. Death in childhood may occur.</description>
        <dbReference type="MIM" id="618741"/>
    </disease>
    <text>The disease is caused by variants affecting the gene represented in this entry.</text>
</comment>
<comment type="similarity">
    <text evidence="4">Belongs to the TRAPP small subunits family. TRAPPC4 subfamily.</text>
</comment>
<feature type="chain" id="PRO_0000211569" description="Trafficking protein particle complex subunit 4">
    <location>
        <begin position="1"/>
        <end position="219"/>
    </location>
</feature>
<feature type="splice variant" id="VSP_056348" description="In isoform 2." evidence="3">
    <location>
        <begin position="81"/>
        <end position="134"/>
    </location>
</feature>
<feature type="sequence variant" id="VAR_052397" description="In dbSNP:rs11640.">
    <original>D</original>
    <variation>A</variation>
    <location>
        <position position="78"/>
    </location>
</feature>
<feature type="strand" evidence="7">
    <location>
        <begin position="3"/>
        <end position="9"/>
    </location>
</feature>
<feature type="strand" evidence="7">
    <location>
        <begin position="15"/>
        <end position="20"/>
    </location>
</feature>
<feature type="strand" evidence="7">
    <location>
        <begin position="28"/>
        <end position="32"/>
    </location>
</feature>
<feature type="strand" evidence="7">
    <location>
        <begin position="37"/>
        <end position="42"/>
    </location>
</feature>
<feature type="strand" evidence="7">
    <location>
        <begin position="44"/>
        <end position="51"/>
    </location>
</feature>
<feature type="strand" evidence="8">
    <location>
        <begin position="54"/>
        <end position="56"/>
    </location>
</feature>
<feature type="turn" evidence="8">
    <location>
        <begin position="57"/>
        <end position="60"/>
    </location>
</feature>
<feature type="strand" evidence="7">
    <location>
        <begin position="62"/>
        <end position="66"/>
    </location>
</feature>
<feature type="strand" evidence="7">
    <location>
        <begin position="79"/>
        <end position="81"/>
    </location>
</feature>
<feature type="helix" evidence="7">
    <location>
        <begin position="82"/>
        <end position="85"/>
    </location>
</feature>
<feature type="helix" evidence="7">
    <location>
        <begin position="89"/>
        <end position="91"/>
    </location>
</feature>
<feature type="strand" evidence="7">
    <location>
        <begin position="93"/>
        <end position="99"/>
    </location>
</feature>
<feature type="helix" evidence="7">
    <location>
        <begin position="105"/>
        <end position="124"/>
    </location>
</feature>
<feature type="strand" evidence="7">
    <location>
        <begin position="127"/>
        <end position="130"/>
    </location>
</feature>
<feature type="strand" evidence="7">
    <location>
        <begin position="135"/>
        <end position="141"/>
    </location>
</feature>
<feature type="strand" evidence="7">
    <location>
        <begin position="143"/>
        <end position="148"/>
    </location>
</feature>
<feature type="strand" evidence="7">
    <location>
        <begin position="154"/>
        <end position="159"/>
    </location>
</feature>
<feature type="helix" evidence="7">
    <location>
        <begin position="166"/>
        <end position="181"/>
    </location>
</feature>
<feature type="helix" evidence="7">
    <location>
        <begin position="196"/>
        <end position="209"/>
    </location>
</feature>
<evidence type="ECO:0000250" key="1">
    <source>
        <dbReference type="UniProtKB" id="Q9ES56"/>
    </source>
</evidence>
<evidence type="ECO:0000269" key="2">
    <source>
    </source>
</evidence>
<evidence type="ECO:0000303" key="3">
    <source>
    </source>
</evidence>
<evidence type="ECO:0000305" key="4"/>
<evidence type="ECO:0000305" key="5">
    <source>
    </source>
</evidence>
<evidence type="ECO:0000312" key="6">
    <source>
        <dbReference type="HGNC" id="HGNC:19943"/>
    </source>
</evidence>
<evidence type="ECO:0007829" key="7">
    <source>
        <dbReference type="PDB" id="2J3T"/>
    </source>
</evidence>
<evidence type="ECO:0007829" key="8">
    <source>
        <dbReference type="PDB" id="2JSN"/>
    </source>
</evidence>
<name>TPPC4_HUMAN</name>
<gene>
    <name evidence="6" type="primary">TRAPPC4</name>
    <name evidence="1" type="synonym">SBDN</name>
    <name type="ORF">CGI-104</name>
    <name type="ORF">HSPC172</name>
    <name type="ORF">PTD009</name>
</gene>
<protein>
    <recommendedName>
        <fullName evidence="4">Trafficking protein particle complex subunit 4</fullName>
    </recommendedName>
    <alternativeName>
        <fullName>Hematopoietic stem/progenitor cell protein 172</fullName>
    </alternativeName>
    <alternativeName>
        <fullName evidence="1">Synbindin</fullName>
    </alternativeName>
    <alternativeName>
        <fullName>TRS23 homolog</fullName>
    </alternativeName>
</protein>
<dbReference type="EMBL" id="AF105025">
    <property type="protein sequence ID" value="AAF21897.1"/>
    <property type="molecule type" value="mRNA"/>
</dbReference>
<dbReference type="EMBL" id="AF078862">
    <property type="protein sequence ID" value="AAD44494.1"/>
    <property type="molecule type" value="mRNA"/>
</dbReference>
<dbReference type="EMBL" id="AF161520">
    <property type="protein sequence ID" value="AAF29135.1"/>
    <property type="molecule type" value="mRNA"/>
</dbReference>
<dbReference type="EMBL" id="AF151862">
    <property type="protein sequence ID" value="AAD34099.1"/>
    <property type="molecule type" value="mRNA"/>
</dbReference>
<dbReference type="EMBL" id="AK290520">
    <property type="protein sequence ID" value="BAF83209.1"/>
    <property type="molecule type" value="mRNA"/>
</dbReference>
<dbReference type="EMBL" id="AK297422">
    <property type="protein sequence ID" value="BAG59853.1"/>
    <property type="molecule type" value="mRNA"/>
</dbReference>
<dbReference type="EMBL" id="AP003392">
    <property type="status" value="NOT_ANNOTATED_CDS"/>
    <property type="molecule type" value="Genomic_DNA"/>
</dbReference>
<dbReference type="EMBL" id="CH471065">
    <property type="protein sequence ID" value="EAW67430.1"/>
    <property type="molecule type" value="Genomic_DNA"/>
</dbReference>
<dbReference type="EMBL" id="BC010866">
    <property type="protein sequence ID" value="AAH10866.1"/>
    <property type="molecule type" value="mRNA"/>
</dbReference>
<dbReference type="CCDS" id="CCDS81633.1">
    <molecule id="Q9Y296-2"/>
</dbReference>
<dbReference type="CCDS" id="CCDS8407.1">
    <molecule id="Q9Y296-1"/>
</dbReference>
<dbReference type="RefSeq" id="NP_001305415.1">
    <property type="nucleotide sequence ID" value="NM_001318486.1"/>
</dbReference>
<dbReference type="RefSeq" id="NP_001305417.1">
    <property type="nucleotide sequence ID" value="NM_001318488.1"/>
</dbReference>
<dbReference type="RefSeq" id="NP_001305418.1">
    <molecule id="Q9Y296-2"/>
    <property type="nucleotide sequence ID" value="NM_001318489.2"/>
</dbReference>
<dbReference type="RefSeq" id="NP_001305419.1">
    <property type="nucleotide sequence ID" value="NM_001318490.1"/>
</dbReference>
<dbReference type="RefSeq" id="NP_001305421.1">
    <property type="nucleotide sequence ID" value="NM_001318492.1"/>
</dbReference>
<dbReference type="RefSeq" id="NP_001305423.1">
    <property type="nucleotide sequence ID" value="NM_001318494.1"/>
</dbReference>
<dbReference type="RefSeq" id="NP_057230.1">
    <molecule id="Q9Y296-1"/>
    <property type="nucleotide sequence ID" value="NM_016146.6"/>
</dbReference>
<dbReference type="PDB" id="2J3T">
    <property type="method" value="X-ray"/>
    <property type="resolution" value="2.40 A"/>
    <property type="chains" value="D=1-219"/>
</dbReference>
<dbReference type="PDB" id="2JSN">
    <property type="method" value="NMR"/>
    <property type="chains" value="A=19-106"/>
</dbReference>
<dbReference type="PDB" id="2ZMV">
    <property type="method" value="X-ray"/>
    <property type="resolution" value="2.80 A"/>
    <property type="chains" value="A/B=1-219"/>
</dbReference>
<dbReference type="PDBsum" id="2J3T"/>
<dbReference type="PDBsum" id="2JSN"/>
<dbReference type="PDBsum" id="2ZMV"/>
<dbReference type="BMRB" id="Q9Y296"/>
<dbReference type="SMR" id="Q9Y296"/>
<dbReference type="BioGRID" id="119523">
    <property type="interactions" value="83"/>
</dbReference>
<dbReference type="ComplexPortal" id="CPX-4749">
    <property type="entry name" value="TRAPP II complex, TRAPPC2 variant"/>
</dbReference>
<dbReference type="ComplexPortal" id="CPX-4750">
    <property type="entry name" value="TRAPP III complex, TRAPPC2 variant"/>
</dbReference>
<dbReference type="ComplexPortal" id="CPX-6902">
    <property type="entry name" value="TRAPP II complex, TRAPPC2B variant"/>
</dbReference>
<dbReference type="ComplexPortal" id="CPX-6903">
    <property type="entry name" value="TRAPP III complex, TRAPPC2B variant"/>
</dbReference>
<dbReference type="CORUM" id="Q9Y296"/>
<dbReference type="DIP" id="DIP-37871N"/>
<dbReference type="FunCoup" id="Q9Y296">
    <property type="interactions" value="1110"/>
</dbReference>
<dbReference type="IntAct" id="Q9Y296">
    <property type="interactions" value="59"/>
</dbReference>
<dbReference type="STRING" id="9606.ENSP00000436005"/>
<dbReference type="DrugBank" id="DB08342">
    <property type="generic name" value="S-palmitoyl-L-cysteine"/>
</dbReference>
<dbReference type="iPTMnet" id="Q9Y296"/>
<dbReference type="PhosphoSitePlus" id="Q9Y296"/>
<dbReference type="BioMuta" id="TRAPPC4"/>
<dbReference type="DMDM" id="20178121"/>
<dbReference type="jPOST" id="Q9Y296"/>
<dbReference type="MassIVE" id="Q9Y296"/>
<dbReference type="PaxDb" id="9606-ENSP00000436005"/>
<dbReference type="PeptideAtlas" id="Q9Y296"/>
<dbReference type="ProteomicsDB" id="4601"/>
<dbReference type="ProteomicsDB" id="85704">
    <molecule id="Q9Y296-1"/>
</dbReference>
<dbReference type="Pumba" id="Q9Y296"/>
<dbReference type="Antibodypedia" id="32564">
    <property type="antibodies" value="311 antibodies from 26 providers"/>
</dbReference>
<dbReference type="DNASU" id="51399"/>
<dbReference type="Ensembl" id="ENST00000434101.6">
    <molecule id="Q9Y296-2"/>
    <property type="protein sequence ID" value="ENSP00000405033.2"/>
    <property type="gene ID" value="ENSG00000196655.12"/>
</dbReference>
<dbReference type="Ensembl" id="ENST00000533632.6">
    <molecule id="Q9Y296-1"/>
    <property type="protein sequence ID" value="ENSP00000436005.1"/>
    <property type="gene ID" value="ENSG00000196655.12"/>
</dbReference>
<dbReference type="Ensembl" id="ENST00000629243.3">
    <molecule id="Q9Y296-1"/>
    <property type="protein sequence ID" value="ENSP00000487467.1"/>
    <property type="gene ID" value="ENSG00000280495.5"/>
</dbReference>
<dbReference type="Ensembl" id="ENST00000629713.2">
    <molecule id="Q9Y296-2"/>
    <property type="protein sequence ID" value="ENSP00000486496.1"/>
    <property type="gene ID" value="ENSG00000280495.5"/>
</dbReference>
<dbReference type="GeneID" id="51399"/>
<dbReference type="KEGG" id="hsa:51399"/>
<dbReference type="MANE-Select" id="ENST00000533632.6">
    <property type="protein sequence ID" value="ENSP00000436005.1"/>
    <property type="RefSeq nucleotide sequence ID" value="NM_016146.6"/>
    <property type="RefSeq protein sequence ID" value="NP_057230.1"/>
</dbReference>
<dbReference type="UCSC" id="uc010ryo.4">
    <molecule id="Q9Y296-1"/>
    <property type="organism name" value="human"/>
</dbReference>
<dbReference type="AGR" id="HGNC:19943"/>
<dbReference type="CTD" id="51399"/>
<dbReference type="DisGeNET" id="51399"/>
<dbReference type="GeneCards" id="TRAPPC4"/>
<dbReference type="HGNC" id="HGNC:19943">
    <property type="gene designation" value="TRAPPC4"/>
</dbReference>
<dbReference type="HPA" id="ENSG00000196655">
    <property type="expression patterns" value="Low tissue specificity"/>
</dbReference>
<dbReference type="MalaCards" id="TRAPPC4"/>
<dbReference type="MIM" id="610971">
    <property type="type" value="gene"/>
</dbReference>
<dbReference type="MIM" id="618741">
    <property type="type" value="phenotype"/>
</dbReference>
<dbReference type="neXtProt" id="NX_Q9Y296"/>
<dbReference type="OpenTargets" id="ENSG00000196655"/>
<dbReference type="Orphanet" id="528084">
    <property type="disease" value="Non-specific syndromic intellectual disability"/>
</dbReference>
<dbReference type="PharmGKB" id="PA134906910"/>
<dbReference type="VEuPathDB" id="HostDB:ENSG00000196655"/>
<dbReference type="eggNOG" id="KOG3369">
    <property type="taxonomic scope" value="Eukaryota"/>
</dbReference>
<dbReference type="GeneTree" id="ENSGT00940000153761"/>
<dbReference type="InParanoid" id="Q9Y296"/>
<dbReference type="OMA" id="GQRDGIN"/>
<dbReference type="OrthoDB" id="246406at2759"/>
<dbReference type="PAN-GO" id="Q9Y296">
    <property type="GO annotations" value="2 GO annotations based on evolutionary models"/>
</dbReference>
<dbReference type="PhylomeDB" id="Q9Y296"/>
<dbReference type="TreeFam" id="TF314561"/>
<dbReference type="PathwayCommons" id="Q9Y296"/>
<dbReference type="Reactome" id="R-HSA-204005">
    <property type="pathway name" value="COPII-mediated vesicle transport"/>
</dbReference>
<dbReference type="Reactome" id="R-HSA-3000170">
    <property type="pathway name" value="Syndecan interactions"/>
</dbReference>
<dbReference type="Reactome" id="R-HSA-8876198">
    <property type="pathway name" value="RAB GEFs exchange GTP for GDP on RABs"/>
</dbReference>
<dbReference type="SignaLink" id="Q9Y296"/>
<dbReference type="BioGRID-ORCS" id="51399">
    <property type="hits" value="503 hits in 1161 CRISPR screens"/>
</dbReference>
<dbReference type="ChiTaRS" id="TRAPPC4">
    <property type="organism name" value="human"/>
</dbReference>
<dbReference type="EvolutionaryTrace" id="Q9Y296"/>
<dbReference type="GeneWiki" id="TRAPPC4"/>
<dbReference type="GenomeRNAi" id="51399"/>
<dbReference type="Pharos" id="Q9Y296">
    <property type="development level" value="Tbio"/>
</dbReference>
<dbReference type="PRO" id="PR:Q9Y296"/>
<dbReference type="Proteomes" id="UP000005640">
    <property type="component" value="Chromosome 11"/>
</dbReference>
<dbReference type="RNAct" id="Q9Y296">
    <property type="molecule type" value="protein"/>
</dbReference>
<dbReference type="Bgee" id="ENSG00000196655">
    <property type="expression patterns" value="Expressed in cortical plate and 101 other cell types or tissues"/>
</dbReference>
<dbReference type="ExpressionAtlas" id="Q9Y296">
    <property type="expression patterns" value="baseline and differential"/>
</dbReference>
<dbReference type="GO" id="GO:0005737">
    <property type="term" value="C:cytoplasm"/>
    <property type="evidence" value="ECO:0000303"/>
    <property type="project" value="ComplexPortal"/>
</dbReference>
<dbReference type="GO" id="GO:0005829">
    <property type="term" value="C:cytosol"/>
    <property type="evidence" value="ECO:0000304"/>
    <property type="project" value="Reactome"/>
</dbReference>
<dbReference type="GO" id="GO:0030425">
    <property type="term" value="C:dendrite"/>
    <property type="evidence" value="ECO:0000250"/>
    <property type="project" value="UniProtKB"/>
</dbReference>
<dbReference type="GO" id="GO:0005783">
    <property type="term" value="C:endoplasmic reticulum"/>
    <property type="evidence" value="ECO:0007669"/>
    <property type="project" value="UniProtKB-SubCell"/>
</dbReference>
<dbReference type="GO" id="GO:0000139">
    <property type="term" value="C:Golgi membrane"/>
    <property type="evidence" value="ECO:0007669"/>
    <property type="project" value="UniProtKB-SubCell"/>
</dbReference>
<dbReference type="GO" id="GO:0005795">
    <property type="term" value="C:Golgi stack"/>
    <property type="evidence" value="ECO:0000250"/>
    <property type="project" value="UniProtKB"/>
</dbReference>
<dbReference type="GO" id="GO:0098839">
    <property type="term" value="C:postsynaptic density membrane"/>
    <property type="evidence" value="ECO:0007669"/>
    <property type="project" value="Ensembl"/>
</dbReference>
<dbReference type="GO" id="GO:0048786">
    <property type="term" value="C:presynaptic active zone"/>
    <property type="evidence" value="ECO:0007669"/>
    <property type="project" value="Ensembl"/>
</dbReference>
<dbReference type="GO" id="GO:0045202">
    <property type="term" value="C:synapse"/>
    <property type="evidence" value="ECO:0000250"/>
    <property type="project" value="UniProtKB"/>
</dbReference>
<dbReference type="GO" id="GO:0008021">
    <property type="term" value="C:synaptic vesicle"/>
    <property type="evidence" value="ECO:0000250"/>
    <property type="project" value="UniProtKB"/>
</dbReference>
<dbReference type="GO" id="GO:0030008">
    <property type="term" value="C:TRAPP complex"/>
    <property type="evidence" value="ECO:0000314"/>
    <property type="project" value="UniProtKB"/>
</dbReference>
<dbReference type="GO" id="GO:1990071">
    <property type="term" value="C:TRAPPII protein complex"/>
    <property type="evidence" value="ECO:0000303"/>
    <property type="project" value="ComplexPortal"/>
</dbReference>
<dbReference type="GO" id="GO:1990072">
    <property type="term" value="C:TRAPPIII protein complex"/>
    <property type="evidence" value="ECO:0000303"/>
    <property type="project" value="ComplexPortal"/>
</dbReference>
<dbReference type="GO" id="GO:0006914">
    <property type="term" value="P:autophagy"/>
    <property type="evidence" value="ECO:0000315"/>
    <property type="project" value="UniProtKB"/>
</dbReference>
<dbReference type="GO" id="GO:0048208">
    <property type="term" value="P:COPII vesicle coating"/>
    <property type="evidence" value="ECO:0000303"/>
    <property type="project" value="ComplexPortal"/>
</dbReference>
<dbReference type="GO" id="GO:0016358">
    <property type="term" value="P:dendrite development"/>
    <property type="evidence" value="ECO:0000250"/>
    <property type="project" value="UniProtKB"/>
</dbReference>
<dbReference type="GO" id="GO:0006888">
    <property type="term" value="P:endoplasmic reticulum to Golgi vesicle-mediated transport"/>
    <property type="evidence" value="ECO:0000315"/>
    <property type="project" value="UniProtKB"/>
</dbReference>
<dbReference type="GO" id="GO:0006901">
    <property type="term" value="P:vesicle coating"/>
    <property type="evidence" value="ECO:0000303"/>
    <property type="project" value="ComplexPortal"/>
</dbReference>
<dbReference type="GO" id="GO:0099022">
    <property type="term" value="P:vesicle tethering"/>
    <property type="evidence" value="ECO:0000303"/>
    <property type="project" value="ComplexPortal"/>
</dbReference>
<dbReference type="CDD" id="cd14856">
    <property type="entry name" value="TRAPPC4_synbindin"/>
    <property type="match status" value="1"/>
</dbReference>
<dbReference type="DisProt" id="DP00562"/>
<dbReference type="FunFam" id="3.30.450.70:FF:000002">
    <property type="entry name" value="Trafficking protein particle complex subunit 4"/>
    <property type="match status" value="1"/>
</dbReference>
<dbReference type="Gene3D" id="3.30.450.70">
    <property type="match status" value="1"/>
</dbReference>
<dbReference type="InterPro" id="IPR011012">
    <property type="entry name" value="Longin-like_dom_sf"/>
</dbReference>
<dbReference type="InterPro" id="IPR007233">
    <property type="entry name" value="TRAPPC"/>
</dbReference>
<dbReference type="PANTHER" id="PTHR23249">
    <property type="entry name" value="TRAFFICKING PROTEIN PARTICLE COMPLEX SUBUNIT"/>
    <property type="match status" value="1"/>
</dbReference>
<dbReference type="PANTHER" id="PTHR23249:SF15">
    <property type="entry name" value="TRAFFICKING PROTEIN PARTICLE COMPLEX SUBUNIT 4"/>
    <property type="match status" value="1"/>
</dbReference>
<dbReference type="Pfam" id="PF04099">
    <property type="entry name" value="Sybindin"/>
    <property type="match status" value="1"/>
</dbReference>
<dbReference type="SMART" id="SM01399">
    <property type="entry name" value="Sybindin"/>
    <property type="match status" value="1"/>
</dbReference>
<dbReference type="SUPFAM" id="SSF64356">
    <property type="entry name" value="SNARE-like"/>
    <property type="match status" value="1"/>
</dbReference>
<keyword id="KW-0002">3D-structure</keyword>
<keyword id="KW-0025">Alternative splicing</keyword>
<keyword id="KW-1003">Cell membrane</keyword>
<keyword id="KW-0256">Endoplasmic reticulum</keyword>
<keyword id="KW-0931">ER-Golgi transport</keyword>
<keyword id="KW-0333">Golgi apparatus</keyword>
<keyword id="KW-0472">Membrane</keyword>
<keyword id="KW-0628">Postsynaptic cell membrane</keyword>
<keyword id="KW-1267">Proteomics identification</keyword>
<keyword id="KW-1185">Reference proteome</keyword>
<keyword id="KW-0770">Synapse</keyword>
<keyword id="KW-0813">Transport</keyword>